<organism>
    <name type="scientific">Corynebacterium efficiens (strain DSM 44549 / YS-314 / AJ 12310 / JCM 11189 / NBRC 100395)</name>
    <dbReference type="NCBI Taxonomy" id="196164"/>
    <lineage>
        <taxon>Bacteria</taxon>
        <taxon>Bacillati</taxon>
        <taxon>Actinomycetota</taxon>
        <taxon>Actinomycetes</taxon>
        <taxon>Mycobacteriales</taxon>
        <taxon>Corynebacteriaceae</taxon>
        <taxon>Corynebacterium</taxon>
    </lineage>
</organism>
<dbReference type="EC" id="5.3.1.1" evidence="1"/>
<dbReference type="EMBL" id="BA000035">
    <property type="protein sequence ID" value="BAC18514.1"/>
    <property type="molecule type" value="Genomic_DNA"/>
</dbReference>
<dbReference type="SMR" id="Q8FT67"/>
<dbReference type="STRING" id="196164.gene:10742125"/>
<dbReference type="KEGG" id="cef:CE1704"/>
<dbReference type="eggNOG" id="COG0149">
    <property type="taxonomic scope" value="Bacteria"/>
</dbReference>
<dbReference type="HOGENOM" id="CLU_024251_2_3_11"/>
<dbReference type="UniPathway" id="UPA00109">
    <property type="reaction ID" value="UER00189"/>
</dbReference>
<dbReference type="UniPathway" id="UPA00138"/>
<dbReference type="Proteomes" id="UP000001409">
    <property type="component" value="Chromosome"/>
</dbReference>
<dbReference type="GO" id="GO:0005829">
    <property type="term" value="C:cytosol"/>
    <property type="evidence" value="ECO:0007669"/>
    <property type="project" value="TreeGrafter"/>
</dbReference>
<dbReference type="GO" id="GO:0004807">
    <property type="term" value="F:triose-phosphate isomerase activity"/>
    <property type="evidence" value="ECO:0007669"/>
    <property type="project" value="UniProtKB-UniRule"/>
</dbReference>
<dbReference type="GO" id="GO:0006094">
    <property type="term" value="P:gluconeogenesis"/>
    <property type="evidence" value="ECO:0007669"/>
    <property type="project" value="UniProtKB-UniRule"/>
</dbReference>
<dbReference type="GO" id="GO:0046166">
    <property type="term" value="P:glyceraldehyde-3-phosphate biosynthetic process"/>
    <property type="evidence" value="ECO:0007669"/>
    <property type="project" value="TreeGrafter"/>
</dbReference>
<dbReference type="GO" id="GO:0019563">
    <property type="term" value="P:glycerol catabolic process"/>
    <property type="evidence" value="ECO:0007669"/>
    <property type="project" value="TreeGrafter"/>
</dbReference>
<dbReference type="GO" id="GO:0006096">
    <property type="term" value="P:glycolytic process"/>
    <property type="evidence" value="ECO:0007669"/>
    <property type="project" value="UniProtKB-UniRule"/>
</dbReference>
<dbReference type="CDD" id="cd00311">
    <property type="entry name" value="TIM"/>
    <property type="match status" value="1"/>
</dbReference>
<dbReference type="FunFam" id="3.20.20.70:FF:000020">
    <property type="entry name" value="Triosephosphate isomerase"/>
    <property type="match status" value="1"/>
</dbReference>
<dbReference type="Gene3D" id="3.20.20.70">
    <property type="entry name" value="Aldolase class I"/>
    <property type="match status" value="1"/>
</dbReference>
<dbReference type="HAMAP" id="MF_00147_B">
    <property type="entry name" value="TIM_B"/>
    <property type="match status" value="1"/>
</dbReference>
<dbReference type="InterPro" id="IPR013785">
    <property type="entry name" value="Aldolase_TIM"/>
</dbReference>
<dbReference type="InterPro" id="IPR035990">
    <property type="entry name" value="TIM_sf"/>
</dbReference>
<dbReference type="InterPro" id="IPR022896">
    <property type="entry name" value="TrioseP_Isoase_bac/euk"/>
</dbReference>
<dbReference type="InterPro" id="IPR000652">
    <property type="entry name" value="Triosephosphate_isomerase"/>
</dbReference>
<dbReference type="InterPro" id="IPR020861">
    <property type="entry name" value="Triosephosphate_isomerase_AS"/>
</dbReference>
<dbReference type="NCBIfam" id="TIGR00419">
    <property type="entry name" value="tim"/>
    <property type="match status" value="1"/>
</dbReference>
<dbReference type="PANTHER" id="PTHR21139">
    <property type="entry name" value="TRIOSEPHOSPHATE ISOMERASE"/>
    <property type="match status" value="1"/>
</dbReference>
<dbReference type="PANTHER" id="PTHR21139:SF42">
    <property type="entry name" value="TRIOSEPHOSPHATE ISOMERASE"/>
    <property type="match status" value="1"/>
</dbReference>
<dbReference type="Pfam" id="PF00121">
    <property type="entry name" value="TIM"/>
    <property type="match status" value="1"/>
</dbReference>
<dbReference type="SUPFAM" id="SSF51351">
    <property type="entry name" value="Triosephosphate isomerase (TIM)"/>
    <property type="match status" value="1"/>
</dbReference>
<dbReference type="PROSITE" id="PS00171">
    <property type="entry name" value="TIM_1"/>
    <property type="match status" value="1"/>
</dbReference>
<dbReference type="PROSITE" id="PS51440">
    <property type="entry name" value="TIM_2"/>
    <property type="match status" value="1"/>
</dbReference>
<comment type="function">
    <text evidence="1">Involved in the gluconeogenesis. Catalyzes stereospecifically the conversion of dihydroxyacetone phosphate (DHAP) to D-glyceraldehyde-3-phosphate (G3P).</text>
</comment>
<comment type="catalytic activity">
    <reaction evidence="1">
        <text>D-glyceraldehyde 3-phosphate = dihydroxyacetone phosphate</text>
        <dbReference type="Rhea" id="RHEA:18585"/>
        <dbReference type="ChEBI" id="CHEBI:57642"/>
        <dbReference type="ChEBI" id="CHEBI:59776"/>
        <dbReference type="EC" id="5.3.1.1"/>
    </reaction>
</comment>
<comment type="pathway">
    <text evidence="1">Carbohydrate biosynthesis; gluconeogenesis.</text>
</comment>
<comment type="pathway">
    <text evidence="1">Carbohydrate degradation; glycolysis; D-glyceraldehyde 3-phosphate from glycerone phosphate: step 1/1.</text>
</comment>
<comment type="subunit">
    <text evidence="1">Homodimer.</text>
</comment>
<comment type="subcellular location">
    <subcellularLocation>
        <location evidence="1">Cytoplasm</location>
    </subcellularLocation>
</comment>
<comment type="similarity">
    <text evidence="1">Belongs to the triosephosphate isomerase family.</text>
</comment>
<name>TPIS_COREF</name>
<sequence length="262" mass="27665">MSPMARKPLIAGNWKMNLDHQQAIGTVQKLAFALHKDYYEKVDVAVIVPFTDLRSVQTLVEGDKLQITYGAQDVSQHESGAYTGEVSASMLAKLNCSWVVVGHSERREYHNETDELVAAKAKAALSKGISPIVCVGEPLEIREAGTHVDYVVEQTRASLAGLSADELANTVIAYEPVWAIGTGKVASAADAQEVCKAIRGLVTELAGEEVAEGMRILYGGSVKAETIAEIVSQPDVDGGLVGGASLDGEAFAKLAANAANAV</sequence>
<keyword id="KW-0963">Cytoplasm</keyword>
<keyword id="KW-0312">Gluconeogenesis</keyword>
<keyword id="KW-0324">Glycolysis</keyword>
<keyword id="KW-0413">Isomerase</keyword>
<keyword id="KW-1185">Reference proteome</keyword>
<reference key="1">
    <citation type="journal article" date="2003" name="Genome Res.">
        <title>Comparative complete genome sequence analysis of the amino acid replacements responsible for the thermostability of Corynebacterium efficiens.</title>
        <authorList>
            <person name="Nishio Y."/>
            <person name="Nakamura Y."/>
            <person name="Kawarabayasi Y."/>
            <person name="Usuda Y."/>
            <person name="Kimura E."/>
            <person name="Sugimoto S."/>
            <person name="Matsui K."/>
            <person name="Yamagishi A."/>
            <person name="Kikuchi H."/>
            <person name="Ikeo K."/>
            <person name="Gojobori T."/>
        </authorList>
    </citation>
    <scope>NUCLEOTIDE SEQUENCE [LARGE SCALE GENOMIC DNA]</scope>
    <source>
        <strain>DSM 44549 / YS-314 / AJ 12310 / JCM 11189 / NBRC 100395</strain>
    </source>
</reference>
<evidence type="ECO:0000255" key="1">
    <source>
        <dbReference type="HAMAP-Rule" id="MF_00147"/>
    </source>
</evidence>
<feature type="chain" id="PRO_0000090213" description="Triosephosphate isomerase">
    <location>
        <begin position="1"/>
        <end position="262"/>
    </location>
</feature>
<feature type="active site" description="Electrophile" evidence="1">
    <location>
        <position position="103"/>
    </location>
</feature>
<feature type="active site" description="Proton acceptor" evidence="1">
    <location>
        <position position="175"/>
    </location>
</feature>
<feature type="binding site" evidence="1">
    <location>
        <begin position="13"/>
        <end position="15"/>
    </location>
    <ligand>
        <name>substrate</name>
    </ligand>
</feature>
<feature type="binding site" evidence="1">
    <location>
        <position position="181"/>
    </location>
    <ligand>
        <name>substrate</name>
    </ligand>
</feature>
<feature type="binding site" evidence="1">
    <location>
        <position position="221"/>
    </location>
    <ligand>
        <name>substrate</name>
    </ligand>
</feature>
<feature type="binding site" evidence="1">
    <location>
        <begin position="242"/>
        <end position="243"/>
    </location>
    <ligand>
        <name>substrate</name>
    </ligand>
</feature>
<accession>Q8FT67</accession>
<gene>
    <name evidence="1" type="primary">tpiA</name>
    <name type="ordered locus">CE1704</name>
</gene>
<proteinExistence type="inferred from homology"/>
<protein>
    <recommendedName>
        <fullName evidence="1">Triosephosphate isomerase</fullName>
        <shortName evidence="1">TIM</shortName>
        <shortName evidence="1">TPI</shortName>
        <ecNumber evidence="1">5.3.1.1</ecNumber>
    </recommendedName>
    <alternativeName>
        <fullName evidence="1">Triose-phosphate isomerase</fullName>
    </alternativeName>
</protein>